<comment type="function">
    <text evidence="7">Probable receptor, which is involved in the internalization of lipophilic molecules and/or signal transduction. May be involved in the uptake of lipoprotein APOE in liver.</text>
</comment>
<comment type="subcellular location">
    <subcellularLocation>
        <location evidence="8">Membrane</location>
        <topology evidence="8">Single-pass type I membrane protein</topology>
    </subcellularLocation>
    <subcellularLocation>
        <location evidence="1">Membrane</location>
        <location evidence="1">Coated pit</location>
    </subcellularLocation>
</comment>
<comment type="tissue specificity">
    <text evidence="7">Highly expressed in heart, lung, liver and liver. Expressed at low level in brain and spleen. Weakly or not expressed in testis and skeletal muscle. In liver, it is expressed in hepatocytes and at higher level in sinusoidal lining. In the kidney, it is expressed in peritubular capillaries. In brain, it is expressed in the epithelium of the choroid plexus ependymal cells of the third ventricle pia matter, and to lesser extent in hippocampal fields CA2 and CA3.</text>
</comment>
<comment type="similarity">
    <text evidence="8">Belongs to the LDLR family.</text>
</comment>
<comment type="sequence caution" evidence="8">
    <conflict type="erroneous initiation">
        <sequence resource="EMBL-CDS" id="AAH11058"/>
    </conflict>
    <text>Truncated N-terminus.</text>
</comment>
<dbReference type="EMBL" id="AB042200">
    <property type="protein sequence ID" value="BAB20775.1"/>
    <property type="molecule type" value="mRNA"/>
</dbReference>
<dbReference type="EMBL" id="AK144035">
    <property type="protein sequence ID" value="BAE25667.1"/>
    <property type="molecule type" value="mRNA"/>
</dbReference>
<dbReference type="EMBL" id="BC011058">
    <property type="protein sequence ID" value="AAH11058.1"/>
    <property type="status" value="ALT_INIT"/>
    <property type="molecule type" value="mRNA"/>
</dbReference>
<dbReference type="EMBL" id="BC052378">
    <property type="protein sequence ID" value="AAH52378.1"/>
    <property type="molecule type" value="mRNA"/>
</dbReference>
<dbReference type="EMBL" id="BC054447">
    <property type="protein sequence ID" value="AAH54447.1"/>
    <property type="molecule type" value="mRNA"/>
</dbReference>
<dbReference type="CCDS" id="CCDS27089.1"/>
<dbReference type="RefSeq" id="NP_075369.2">
    <property type="nucleotide sequence ID" value="NM_022993.3"/>
</dbReference>
<dbReference type="SMR" id="Q7TQH7"/>
<dbReference type="FunCoup" id="Q7TQH7">
    <property type="interactions" value="1286"/>
</dbReference>
<dbReference type="STRING" id="10090.ENSMUSP00000022782"/>
<dbReference type="GlyCosmos" id="Q7TQH7">
    <property type="glycosylation" value="4 sites, No reported glycans"/>
</dbReference>
<dbReference type="GlyGen" id="Q7TQH7">
    <property type="glycosylation" value="8 sites, 1 N-linked glycan (2 sites)"/>
</dbReference>
<dbReference type="iPTMnet" id="Q7TQH7"/>
<dbReference type="PhosphoSitePlus" id="Q7TQH7"/>
<dbReference type="SwissPalm" id="Q7TQH7"/>
<dbReference type="PaxDb" id="10090-ENSMUSP00000022782"/>
<dbReference type="ProteomicsDB" id="292044"/>
<dbReference type="Antibodypedia" id="95">
    <property type="antibodies" value="107 antibodies from 24 providers"/>
</dbReference>
<dbReference type="DNASU" id="65107"/>
<dbReference type="Ensembl" id="ENSMUST00000022782.10">
    <property type="protein sequence ID" value="ENSMUSP00000022782.9"/>
    <property type="gene ID" value="ENSMUSG00000022175.10"/>
</dbReference>
<dbReference type="GeneID" id="65107"/>
<dbReference type="KEGG" id="mmu:65107"/>
<dbReference type="UCSC" id="uc007twd.1">
    <property type="organism name" value="mouse"/>
</dbReference>
<dbReference type="AGR" id="MGI:1929480"/>
<dbReference type="CTD" id="26020"/>
<dbReference type="MGI" id="MGI:1929480">
    <property type="gene designation" value="Lrp10"/>
</dbReference>
<dbReference type="VEuPathDB" id="HostDB:ENSMUSG00000022175"/>
<dbReference type="eggNOG" id="KOG1215">
    <property type="taxonomic scope" value="Eukaryota"/>
</dbReference>
<dbReference type="GeneTree" id="ENSGT00940000160783"/>
<dbReference type="HOGENOM" id="CLU_013747_2_0_1"/>
<dbReference type="InParanoid" id="Q7TQH7"/>
<dbReference type="OMA" id="GPADRCN"/>
<dbReference type="OrthoDB" id="9990982at2759"/>
<dbReference type="PhylomeDB" id="Q7TQH7"/>
<dbReference type="TreeFam" id="TF332149"/>
<dbReference type="Reactome" id="R-MMU-975634">
    <property type="pathway name" value="Retinoid metabolism and transport"/>
</dbReference>
<dbReference type="BioGRID-ORCS" id="65107">
    <property type="hits" value="8 hits in 82 CRISPR screens"/>
</dbReference>
<dbReference type="ChiTaRS" id="Lrp10">
    <property type="organism name" value="mouse"/>
</dbReference>
<dbReference type="PRO" id="PR:Q7TQH7"/>
<dbReference type="Proteomes" id="UP000000589">
    <property type="component" value="Chromosome 14"/>
</dbReference>
<dbReference type="RNAct" id="Q7TQH7">
    <property type="molecule type" value="protein"/>
</dbReference>
<dbReference type="Bgee" id="ENSMUSG00000022175">
    <property type="expression patterns" value="Expressed in choroid plexus of fourth ventricle and 280 other cell types or tissues"/>
</dbReference>
<dbReference type="ExpressionAtlas" id="Q7TQH7">
    <property type="expression patterns" value="baseline and differential"/>
</dbReference>
<dbReference type="GO" id="GO:0005905">
    <property type="term" value="C:clathrin-coated pit"/>
    <property type="evidence" value="ECO:0007669"/>
    <property type="project" value="UniProtKB-KW"/>
</dbReference>
<dbReference type="GO" id="GO:0016020">
    <property type="term" value="C:membrane"/>
    <property type="evidence" value="ECO:0000314"/>
    <property type="project" value="MGI"/>
</dbReference>
<dbReference type="GO" id="GO:0005041">
    <property type="term" value="F:low-density lipoprotein particle receptor activity"/>
    <property type="evidence" value="ECO:0000314"/>
    <property type="project" value="MGI"/>
</dbReference>
<dbReference type="GO" id="GO:0006897">
    <property type="term" value="P:endocytosis"/>
    <property type="evidence" value="ECO:0007669"/>
    <property type="project" value="UniProtKB-KW"/>
</dbReference>
<dbReference type="GO" id="GO:0048839">
    <property type="term" value="P:inner ear development"/>
    <property type="evidence" value="ECO:0000314"/>
    <property type="project" value="MGI"/>
</dbReference>
<dbReference type="GO" id="GO:0006629">
    <property type="term" value="P:lipid metabolic process"/>
    <property type="evidence" value="ECO:0000314"/>
    <property type="project" value="MGI"/>
</dbReference>
<dbReference type="GO" id="GO:0006869">
    <property type="term" value="P:lipid transport"/>
    <property type="evidence" value="ECO:0000314"/>
    <property type="project" value="MGI"/>
</dbReference>
<dbReference type="CDD" id="cd00041">
    <property type="entry name" value="CUB"/>
    <property type="match status" value="2"/>
</dbReference>
<dbReference type="CDD" id="cd00112">
    <property type="entry name" value="LDLa"/>
    <property type="match status" value="3"/>
</dbReference>
<dbReference type="FunFam" id="4.10.400.10:FF:000091">
    <property type="entry name" value="Low-density lipoprotein receptor (Ldl)"/>
    <property type="match status" value="1"/>
</dbReference>
<dbReference type="FunFam" id="4.10.400.10:FF:000055">
    <property type="entry name" value="Low-density lipoprotein receptor-related protein 10"/>
    <property type="match status" value="1"/>
</dbReference>
<dbReference type="FunFam" id="4.10.400.10:FF:000050">
    <property type="entry name" value="low-density lipoprotein receptor-related protein 10"/>
    <property type="match status" value="1"/>
</dbReference>
<dbReference type="Gene3D" id="4.10.400.10">
    <property type="entry name" value="Low-density Lipoprotein Receptor"/>
    <property type="match status" value="4"/>
</dbReference>
<dbReference type="Gene3D" id="2.60.120.290">
    <property type="entry name" value="Spermadhesin, CUB domain"/>
    <property type="match status" value="2"/>
</dbReference>
<dbReference type="InterPro" id="IPR000859">
    <property type="entry name" value="CUB_dom"/>
</dbReference>
<dbReference type="InterPro" id="IPR036055">
    <property type="entry name" value="LDL_receptor-like_sf"/>
</dbReference>
<dbReference type="InterPro" id="IPR050685">
    <property type="entry name" value="LDLR"/>
</dbReference>
<dbReference type="InterPro" id="IPR023415">
    <property type="entry name" value="LDLR_class-A_CS"/>
</dbReference>
<dbReference type="InterPro" id="IPR002172">
    <property type="entry name" value="LDrepeatLR_classA_rpt"/>
</dbReference>
<dbReference type="InterPro" id="IPR035914">
    <property type="entry name" value="Sperma_CUB_dom_sf"/>
</dbReference>
<dbReference type="PANTHER" id="PTHR24270">
    <property type="entry name" value="LOW-DENSITY LIPOPROTEIN RECEPTOR-RELATED"/>
    <property type="match status" value="1"/>
</dbReference>
<dbReference type="PANTHER" id="PTHR24270:SF17">
    <property type="entry name" value="LOW-DENSITY LIPOPROTEIN RECEPTOR-RELATED PROTEIN 10"/>
    <property type="match status" value="1"/>
</dbReference>
<dbReference type="Pfam" id="PF00431">
    <property type="entry name" value="CUB"/>
    <property type="match status" value="1"/>
</dbReference>
<dbReference type="Pfam" id="PF00057">
    <property type="entry name" value="Ldl_recept_a"/>
    <property type="match status" value="2"/>
</dbReference>
<dbReference type="PRINTS" id="PR00261">
    <property type="entry name" value="LDLRECEPTOR"/>
</dbReference>
<dbReference type="SMART" id="SM00042">
    <property type="entry name" value="CUB"/>
    <property type="match status" value="2"/>
</dbReference>
<dbReference type="SMART" id="SM00192">
    <property type="entry name" value="LDLa"/>
    <property type="match status" value="4"/>
</dbReference>
<dbReference type="SUPFAM" id="SSF57424">
    <property type="entry name" value="LDL receptor-like module"/>
    <property type="match status" value="2"/>
</dbReference>
<dbReference type="SUPFAM" id="SSF49854">
    <property type="entry name" value="Spermadhesin, CUB domain"/>
    <property type="match status" value="2"/>
</dbReference>
<dbReference type="PROSITE" id="PS01180">
    <property type="entry name" value="CUB"/>
    <property type="match status" value="1"/>
</dbReference>
<dbReference type="PROSITE" id="PS01209">
    <property type="entry name" value="LDLRA_1"/>
    <property type="match status" value="1"/>
</dbReference>
<dbReference type="PROSITE" id="PS50068">
    <property type="entry name" value="LDLRA_2"/>
    <property type="match status" value="4"/>
</dbReference>
<sequence length="713" mass="76461">MLSALPLLFLLLGGALARPDRITFPRSACEAPPAVLSEVQGTLQRPLGRDSRSSPANCTWVILGSKDQTVTVRFQKLHLACGSEHLILHSPLQPPISLCEAPSGPLQLPGGNVTITYSYAGARAPMGQGFLLTYSQDWLLCLQEEFQCLNHRCIPAAQRCDGIDACGDGSDEAGCSSDPFPNLNPAPAPTLACNLTLEDFYGVFSSPGYSHLASVSHPQSCLWLLDPHDGRRLAVRFTALDLSYGDAVHVYDGAGPPETPRLLRSLTHFSNGKAVTVETLSGQAVVSYHTVAWSSGRGFNATYHVRGYCLPWDRPCGLGSGLGASENLGERCYSEAQRCDGSWDCADGTDEEGCPGCPPGHFPCGAAGTPGATACYLPADRCNYQTFCADGADERRCRHCQPGNFRCRDEKCVYETWVCDGQPDCTDGSDEWDCSYALPRKVITAAVIGSLVCGLLLVIALGCTCKLYAIRTQEYSIFAPLSRMEAEIVQQQAPPSYGQLIAQGAIPPVEDFPTENPNDNSVLGNLRSLLQILRQDMTPGGTSGGRRRQRGRSIRRLVRRLRRWGLLPRTNTPARAPETRSQVTPSVPSEALDDSTGQACEGGAVGGQDGEQAPPLPIKTPIPTPSTLPALATVSEPPGPLPSVPVESSLLSGVVQVLRGRLLPSLWSPGPTWTQTGTHTTVLSPEDEDDVLLLPLAEPEVWVVEAEDEPLLA</sequence>
<organism>
    <name type="scientific">Mus musculus</name>
    <name type="common">Mouse</name>
    <dbReference type="NCBI Taxonomy" id="10090"/>
    <lineage>
        <taxon>Eukaryota</taxon>
        <taxon>Metazoa</taxon>
        <taxon>Chordata</taxon>
        <taxon>Craniata</taxon>
        <taxon>Vertebrata</taxon>
        <taxon>Euteleostomi</taxon>
        <taxon>Mammalia</taxon>
        <taxon>Eutheria</taxon>
        <taxon>Euarchontoglires</taxon>
        <taxon>Glires</taxon>
        <taxon>Rodentia</taxon>
        <taxon>Myomorpha</taxon>
        <taxon>Muroidea</taxon>
        <taxon>Muridae</taxon>
        <taxon>Murinae</taxon>
        <taxon>Mus</taxon>
        <taxon>Mus</taxon>
    </lineage>
</organism>
<feature type="signal peptide" evidence="3">
    <location>
        <begin position="1"/>
        <end position="17"/>
    </location>
</feature>
<feature type="chain" id="PRO_0000017336" description="Low-density lipoprotein receptor-related protein 10">
    <location>
        <begin position="18"/>
        <end position="713"/>
    </location>
</feature>
<feature type="topological domain" description="Extracellular" evidence="3">
    <location>
        <begin position="18"/>
        <end position="441"/>
    </location>
</feature>
<feature type="transmembrane region" description="Helical" evidence="3">
    <location>
        <begin position="442"/>
        <end position="462"/>
    </location>
</feature>
<feature type="topological domain" description="Cytoplasmic" evidence="3">
    <location>
        <begin position="463"/>
        <end position="713"/>
    </location>
</feature>
<feature type="domain" description="CUB 1" evidence="4">
    <location>
        <begin position="29"/>
        <end position="137"/>
    </location>
</feature>
<feature type="domain" description="LDL-receptor class A 1" evidence="5">
    <location>
        <begin position="140"/>
        <end position="176"/>
    </location>
</feature>
<feature type="domain" description="CUB 2" evidence="4">
    <location>
        <begin position="193"/>
        <end position="306"/>
    </location>
</feature>
<feature type="domain" description="LDL-receptor class A 2" evidence="5">
    <location>
        <begin position="308"/>
        <end position="355"/>
    </location>
</feature>
<feature type="domain" description="LDL-receptor class A 3" evidence="5">
    <location>
        <begin position="356"/>
        <end position="398"/>
    </location>
</feature>
<feature type="domain" description="LDL-receptor class A 4" evidence="5">
    <location>
        <begin position="399"/>
        <end position="435"/>
    </location>
</feature>
<feature type="region of interest" description="Disordered" evidence="6">
    <location>
        <begin position="566"/>
        <end position="636"/>
    </location>
</feature>
<feature type="compositionally biased region" description="Pro residues" evidence="6">
    <location>
        <begin position="614"/>
        <end position="626"/>
    </location>
</feature>
<feature type="modified residue" description="Phosphothreonine" evidence="2">
    <location>
        <position position="596"/>
    </location>
</feature>
<feature type="glycosylation site" description="N-linked (GlcNAc...) asparagine" evidence="3">
    <location>
        <position position="57"/>
    </location>
</feature>
<feature type="glycosylation site" description="N-linked (GlcNAc...) asparagine" evidence="3">
    <location>
        <position position="112"/>
    </location>
</feature>
<feature type="glycosylation site" description="N-linked (GlcNAc...) asparagine" evidence="3">
    <location>
        <position position="194"/>
    </location>
</feature>
<feature type="glycosylation site" description="N-linked (GlcNAc...) asparagine" evidence="3">
    <location>
        <position position="300"/>
    </location>
</feature>
<feature type="disulfide bond" evidence="1">
    <location>
        <begin position="29"/>
        <end position="58"/>
    </location>
</feature>
<feature type="disulfide bond" evidence="1">
    <location>
        <begin position="81"/>
        <end position="99"/>
    </location>
</feature>
<feature type="disulfide bond" evidence="1">
    <location>
        <begin position="141"/>
        <end position="153"/>
    </location>
</feature>
<feature type="disulfide bond" evidence="1">
    <location>
        <begin position="148"/>
        <end position="166"/>
    </location>
</feature>
<feature type="disulfide bond" evidence="1">
    <location>
        <begin position="160"/>
        <end position="175"/>
    </location>
</feature>
<feature type="disulfide bond" evidence="1">
    <location>
        <begin position="193"/>
        <end position="221"/>
    </location>
</feature>
<feature type="disulfide bond" evidence="1">
    <location>
        <begin position="309"/>
        <end position="332"/>
    </location>
</feature>
<feature type="disulfide bond" evidence="1">
    <location>
        <begin position="316"/>
        <end position="345"/>
    </location>
</feature>
<feature type="disulfide bond" evidence="1">
    <location>
        <begin position="339"/>
        <end position="354"/>
    </location>
</feature>
<feature type="disulfide bond" evidence="1">
    <location>
        <begin position="357"/>
        <end position="375"/>
    </location>
</feature>
<feature type="disulfide bond" evidence="1">
    <location>
        <begin position="364"/>
        <end position="388"/>
    </location>
</feature>
<feature type="disulfide bond" evidence="1">
    <location>
        <begin position="382"/>
        <end position="397"/>
    </location>
</feature>
<feature type="disulfide bond" evidence="1">
    <location>
        <begin position="400"/>
        <end position="412"/>
    </location>
</feature>
<feature type="disulfide bond" evidence="1">
    <location>
        <begin position="407"/>
        <end position="425"/>
    </location>
</feature>
<feature type="disulfide bond" evidence="1">
    <location>
        <begin position="419"/>
        <end position="434"/>
    </location>
</feature>
<feature type="sequence conflict" description="In Ref. 1; BAB20775 and 3; AAH54447." evidence="8" ref="1 3">
    <original>I</original>
    <variation>V</variation>
    <location>
        <position position="554"/>
    </location>
</feature>
<feature type="sequence conflict" description="In Ref. 1; BAB20775." evidence="8" ref="1">
    <original>Q</original>
    <variation>H</variation>
    <location>
        <position position="598"/>
    </location>
</feature>
<feature type="sequence conflict" description="In Ref. 1; BAB20775." evidence="8" ref="1">
    <original>P</original>
    <variation>T</variation>
    <location>
        <position position="637"/>
    </location>
</feature>
<protein>
    <recommendedName>
        <fullName>Low-density lipoprotein receptor-related protein 10</fullName>
        <shortName>LRP-10</shortName>
    </recommendedName>
</protein>
<proteinExistence type="evidence at transcript level"/>
<reference key="1">
    <citation type="journal article" date="2000" name="Biochemistry">
        <title>A novel low-density lipoprotein receptor-related protein mediating cellular uptake of apolipoprotein E-enriched beta-VLDL in vitro.</title>
        <authorList>
            <person name="Sugiyama T."/>
            <person name="Kumagai H."/>
            <person name="Morikawa Y."/>
            <person name="Wada Y."/>
            <person name="Sugiyama A."/>
            <person name="Yasuda K."/>
            <person name="Yokoi N."/>
            <person name="Tamura S."/>
            <person name="Kojima T."/>
            <person name="Nosaka T."/>
            <person name="Senba E."/>
            <person name="Kimura S."/>
            <person name="Kadowaki T."/>
            <person name="Kodama T."/>
            <person name="Kitamura T."/>
        </authorList>
    </citation>
    <scope>NUCLEOTIDE SEQUENCE [MRNA]</scope>
    <scope>FUNCTION</scope>
    <scope>TISSUE SPECIFICITY</scope>
    <source>
        <tissue>Lymphocyte</tissue>
    </source>
</reference>
<reference key="2">
    <citation type="journal article" date="2005" name="Science">
        <title>The transcriptional landscape of the mammalian genome.</title>
        <authorList>
            <person name="Carninci P."/>
            <person name="Kasukawa T."/>
            <person name="Katayama S."/>
            <person name="Gough J."/>
            <person name="Frith M.C."/>
            <person name="Maeda N."/>
            <person name="Oyama R."/>
            <person name="Ravasi T."/>
            <person name="Lenhard B."/>
            <person name="Wells C."/>
            <person name="Kodzius R."/>
            <person name="Shimokawa K."/>
            <person name="Bajic V.B."/>
            <person name="Brenner S.E."/>
            <person name="Batalov S."/>
            <person name="Forrest A.R."/>
            <person name="Zavolan M."/>
            <person name="Davis M.J."/>
            <person name="Wilming L.G."/>
            <person name="Aidinis V."/>
            <person name="Allen J.E."/>
            <person name="Ambesi-Impiombato A."/>
            <person name="Apweiler R."/>
            <person name="Aturaliya R.N."/>
            <person name="Bailey T.L."/>
            <person name="Bansal M."/>
            <person name="Baxter L."/>
            <person name="Beisel K.W."/>
            <person name="Bersano T."/>
            <person name="Bono H."/>
            <person name="Chalk A.M."/>
            <person name="Chiu K.P."/>
            <person name="Choudhary V."/>
            <person name="Christoffels A."/>
            <person name="Clutterbuck D.R."/>
            <person name="Crowe M.L."/>
            <person name="Dalla E."/>
            <person name="Dalrymple B.P."/>
            <person name="de Bono B."/>
            <person name="Della Gatta G."/>
            <person name="di Bernardo D."/>
            <person name="Down T."/>
            <person name="Engstrom P."/>
            <person name="Fagiolini M."/>
            <person name="Faulkner G."/>
            <person name="Fletcher C.F."/>
            <person name="Fukushima T."/>
            <person name="Furuno M."/>
            <person name="Futaki S."/>
            <person name="Gariboldi M."/>
            <person name="Georgii-Hemming P."/>
            <person name="Gingeras T.R."/>
            <person name="Gojobori T."/>
            <person name="Green R.E."/>
            <person name="Gustincich S."/>
            <person name="Harbers M."/>
            <person name="Hayashi Y."/>
            <person name="Hensch T.K."/>
            <person name="Hirokawa N."/>
            <person name="Hill D."/>
            <person name="Huminiecki L."/>
            <person name="Iacono M."/>
            <person name="Ikeo K."/>
            <person name="Iwama A."/>
            <person name="Ishikawa T."/>
            <person name="Jakt M."/>
            <person name="Kanapin A."/>
            <person name="Katoh M."/>
            <person name="Kawasawa Y."/>
            <person name="Kelso J."/>
            <person name="Kitamura H."/>
            <person name="Kitano H."/>
            <person name="Kollias G."/>
            <person name="Krishnan S.P."/>
            <person name="Kruger A."/>
            <person name="Kummerfeld S.K."/>
            <person name="Kurochkin I.V."/>
            <person name="Lareau L.F."/>
            <person name="Lazarevic D."/>
            <person name="Lipovich L."/>
            <person name="Liu J."/>
            <person name="Liuni S."/>
            <person name="McWilliam S."/>
            <person name="Madan Babu M."/>
            <person name="Madera M."/>
            <person name="Marchionni L."/>
            <person name="Matsuda H."/>
            <person name="Matsuzawa S."/>
            <person name="Miki H."/>
            <person name="Mignone F."/>
            <person name="Miyake S."/>
            <person name="Morris K."/>
            <person name="Mottagui-Tabar S."/>
            <person name="Mulder N."/>
            <person name="Nakano N."/>
            <person name="Nakauchi H."/>
            <person name="Ng P."/>
            <person name="Nilsson R."/>
            <person name="Nishiguchi S."/>
            <person name="Nishikawa S."/>
            <person name="Nori F."/>
            <person name="Ohara O."/>
            <person name="Okazaki Y."/>
            <person name="Orlando V."/>
            <person name="Pang K.C."/>
            <person name="Pavan W.J."/>
            <person name="Pavesi G."/>
            <person name="Pesole G."/>
            <person name="Petrovsky N."/>
            <person name="Piazza S."/>
            <person name="Reed J."/>
            <person name="Reid J.F."/>
            <person name="Ring B.Z."/>
            <person name="Ringwald M."/>
            <person name="Rost B."/>
            <person name="Ruan Y."/>
            <person name="Salzberg S.L."/>
            <person name="Sandelin A."/>
            <person name="Schneider C."/>
            <person name="Schoenbach C."/>
            <person name="Sekiguchi K."/>
            <person name="Semple C.A."/>
            <person name="Seno S."/>
            <person name="Sessa L."/>
            <person name="Sheng Y."/>
            <person name="Shibata Y."/>
            <person name="Shimada H."/>
            <person name="Shimada K."/>
            <person name="Silva D."/>
            <person name="Sinclair B."/>
            <person name="Sperling S."/>
            <person name="Stupka E."/>
            <person name="Sugiura K."/>
            <person name="Sultana R."/>
            <person name="Takenaka Y."/>
            <person name="Taki K."/>
            <person name="Tammoja K."/>
            <person name="Tan S.L."/>
            <person name="Tang S."/>
            <person name="Taylor M.S."/>
            <person name="Tegner J."/>
            <person name="Teichmann S.A."/>
            <person name="Ueda H.R."/>
            <person name="van Nimwegen E."/>
            <person name="Verardo R."/>
            <person name="Wei C.L."/>
            <person name="Yagi K."/>
            <person name="Yamanishi H."/>
            <person name="Zabarovsky E."/>
            <person name="Zhu S."/>
            <person name="Zimmer A."/>
            <person name="Hide W."/>
            <person name="Bult C."/>
            <person name="Grimmond S.M."/>
            <person name="Teasdale R.D."/>
            <person name="Liu E.T."/>
            <person name="Brusic V."/>
            <person name="Quackenbush J."/>
            <person name="Wahlestedt C."/>
            <person name="Mattick J.S."/>
            <person name="Hume D.A."/>
            <person name="Kai C."/>
            <person name="Sasaki D."/>
            <person name="Tomaru Y."/>
            <person name="Fukuda S."/>
            <person name="Kanamori-Katayama M."/>
            <person name="Suzuki M."/>
            <person name="Aoki J."/>
            <person name="Arakawa T."/>
            <person name="Iida J."/>
            <person name="Imamura K."/>
            <person name="Itoh M."/>
            <person name="Kato T."/>
            <person name="Kawaji H."/>
            <person name="Kawagashira N."/>
            <person name="Kawashima T."/>
            <person name="Kojima M."/>
            <person name="Kondo S."/>
            <person name="Konno H."/>
            <person name="Nakano K."/>
            <person name="Ninomiya N."/>
            <person name="Nishio T."/>
            <person name="Okada M."/>
            <person name="Plessy C."/>
            <person name="Shibata K."/>
            <person name="Shiraki T."/>
            <person name="Suzuki S."/>
            <person name="Tagami M."/>
            <person name="Waki K."/>
            <person name="Watahiki A."/>
            <person name="Okamura-Oho Y."/>
            <person name="Suzuki H."/>
            <person name="Kawai J."/>
            <person name="Hayashizaki Y."/>
        </authorList>
    </citation>
    <scope>NUCLEOTIDE SEQUENCE [LARGE SCALE MRNA]</scope>
    <source>
        <strain>C57BL/6J</strain>
        <tissue>Kidney</tissue>
    </source>
</reference>
<reference key="3">
    <citation type="journal article" date="2004" name="Genome Res.">
        <title>The status, quality, and expansion of the NIH full-length cDNA project: the Mammalian Gene Collection (MGC).</title>
        <authorList>
            <consortium name="The MGC Project Team"/>
        </authorList>
    </citation>
    <scope>NUCLEOTIDE SEQUENCE [LARGE SCALE MRNA]</scope>
    <source>
        <strain>C57BL/6J</strain>
        <strain>FVB/N</strain>
        <tissue>Brain</tissue>
        <tissue>Colon</tissue>
        <tissue>Mammary tumor</tissue>
    </source>
</reference>
<keyword id="KW-0168">Coated pit</keyword>
<keyword id="KW-1015">Disulfide bond</keyword>
<keyword id="KW-0254">Endocytosis</keyword>
<keyword id="KW-0325">Glycoprotein</keyword>
<keyword id="KW-0472">Membrane</keyword>
<keyword id="KW-0597">Phosphoprotein</keyword>
<keyword id="KW-0675">Receptor</keyword>
<keyword id="KW-1185">Reference proteome</keyword>
<keyword id="KW-0677">Repeat</keyword>
<keyword id="KW-0732">Signal</keyword>
<keyword id="KW-0812">Transmembrane</keyword>
<keyword id="KW-1133">Transmembrane helix</keyword>
<accession>Q7TQH7</accession>
<accession>Q3UNT0</accession>
<accession>Q7TS95</accession>
<accession>Q921T0</accession>
<accession>Q9EPE8</accession>
<gene>
    <name type="primary">Lrp10</name>
    <name type="synonym">Lrp9</name>
</gene>
<name>LRP10_MOUSE</name>
<evidence type="ECO:0000250" key="1"/>
<evidence type="ECO:0000250" key="2">
    <source>
        <dbReference type="UniProtKB" id="Q7Z4F1"/>
    </source>
</evidence>
<evidence type="ECO:0000255" key="3"/>
<evidence type="ECO:0000255" key="4">
    <source>
        <dbReference type="PROSITE-ProRule" id="PRU00059"/>
    </source>
</evidence>
<evidence type="ECO:0000255" key="5">
    <source>
        <dbReference type="PROSITE-ProRule" id="PRU00124"/>
    </source>
</evidence>
<evidence type="ECO:0000256" key="6">
    <source>
        <dbReference type="SAM" id="MobiDB-lite"/>
    </source>
</evidence>
<evidence type="ECO:0000269" key="7">
    <source>
    </source>
</evidence>
<evidence type="ECO:0000305" key="8"/>